<feature type="chain" id="PRO_0000225565" description="DNA-directed RNA polymerase subunit beta'">
    <location>
        <begin position="1"/>
        <end position="1399"/>
    </location>
</feature>
<feature type="binding site" evidence="1">
    <location>
        <position position="70"/>
    </location>
    <ligand>
        <name>Zn(2+)</name>
        <dbReference type="ChEBI" id="CHEBI:29105"/>
        <label>1</label>
    </ligand>
</feature>
<feature type="binding site" evidence="1">
    <location>
        <position position="72"/>
    </location>
    <ligand>
        <name>Zn(2+)</name>
        <dbReference type="ChEBI" id="CHEBI:29105"/>
        <label>1</label>
    </ligand>
</feature>
<feature type="binding site" evidence="1">
    <location>
        <position position="85"/>
    </location>
    <ligand>
        <name>Zn(2+)</name>
        <dbReference type="ChEBI" id="CHEBI:29105"/>
        <label>1</label>
    </ligand>
</feature>
<feature type="binding site" evidence="1">
    <location>
        <position position="88"/>
    </location>
    <ligand>
        <name>Zn(2+)</name>
        <dbReference type="ChEBI" id="CHEBI:29105"/>
        <label>1</label>
    </ligand>
</feature>
<feature type="binding site" evidence="1">
    <location>
        <position position="460"/>
    </location>
    <ligand>
        <name>Mg(2+)</name>
        <dbReference type="ChEBI" id="CHEBI:18420"/>
    </ligand>
</feature>
<feature type="binding site" evidence="1">
    <location>
        <position position="462"/>
    </location>
    <ligand>
        <name>Mg(2+)</name>
        <dbReference type="ChEBI" id="CHEBI:18420"/>
    </ligand>
</feature>
<feature type="binding site" evidence="1">
    <location>
        <position position="464"/>
    </location>
    <ligand>
        <name>Mg(2+)</name>
        <dbReference type="ChEBI" id="CHEBI:18420"/>
    </ligand>
</feature>
<feature type="binding site" evidence="1">
    <location>
        <position position="814"/>
    </location>
    <ligand>
        <name>Zn(2+)</name>
        <dbReference type="ChEBI" id="CHEBI:29105"/>
        <label>2</label>
    </ligand>
</feature>
<feature type="binding site" evidence="1">
    <location>
        <position position="888"/>
    </location>
    <ligand>
        <name>Zn(2+)</name>
        <dbReference type="ChEBI" id="CHEBI:29105"/>
        <label>2</label>
    </ligand>
</feature>
<feature type="binding site" evidence="1">
    <location>
        <position position="895"/>
    </location>
    <ligand>
        <name>Zn(2+)</name>
        <dbReference type="ChEBI" id="CHEBI:29105"/>
        <label>2</label>
    </ligand>
</feature>
<feature type="binding site" evidence="1">
    <location>
        <position position="898"/>
    </location>
    <ligand>
        <name>Zn(2+)</name>
        <dbReference type="ChEBI" id="CHEBI:29105"/>
        <label>2</label>
    </ligand>
</feature>
<comment type="function">
    <text evidence="1">DNA-dependent RNA polymerase catalyzes the transcription of DNA into RNA using the four ribonucleoside triphosphates as substrates.</text>
</comment>
<comment type="catalytic activity">
    <reaction evidence="1">
        <text>RNA(n) + a ribonucleoside 5'-triphosphate = RNA(n+1) + diphosphate</text>
        <dbReference type="Rhea" id="RHEA:21248"/>
        <dbReference type="Rhea" id="RHEA-COMP:14527"/>
        <dbReference type="Rhea" id="RHEA-COMP:17342"/>
        <dbReference type="ChEBI" id="CHEBI:33019"/>
        <dbReference type="ChEBI" id="CHEBI:61557"/>
        <dbReference type="ChEBI" id="CHEBI:140395"/>
        <dbReference type="EC" id="2.7.7.6"/>
    </reaction>
</comment>
<comment type="cofactor">
    <cofactor evidence="1">
        <name>Mg(2+)</name>
        <dbReference type="ChEBI" id="CHEBI:18420"/>
    </cofactor>
    <text evidence="1">Binds 1 Mg(2+) ion per subunit.</text>
</comment>
<comment type="cofactor">
    <cofactor evidence="1">
        <name>Zn(2+)</name>
        <dbReference type="ChEBI" id="CHEBI:29105"/>
    </cofactor>
    <text evidence="1">Binds 2 Zn(2+) ions per subunit.</text>
</comment>
<comment type="subunit">
    <text evidence="1">The RNAP catalytic core consists of 2 alpha, 1 beta, 1 beta' and 1 omega subunit. When a sigma factor is associated with the core the holoenzyme is formed, which can initiate transcription.</text>
</comment>
<comment type="similarity">
    <text evidence="1">Belongs to the RNA polymerase beta' chain family.</text>
</comment>
<protein>
    <recommendedName>
        <fullName evidence="1">DNA-directed RNA polymerase subunit beta'</fullName>
        <shortName evidence="1">RNAP subunit beta'</shortName>
        <ecNumber evidence="1">2.7.7.6</ecNumber>
    </recommendedName>
    <alternativeName>
        <fullName evidence="1">RNA polymerase subunit beta'</fullName>
    </alternativeName>
    <alternativeName>
        <fullName evidence="1">Transcriptase subunit beta'</fullName>
    </alternativeName>
</protein>
<dbReference type="EC" id="2.7.7.6" evidence="1"/>
<dbReference type="EMBL" id="CP000076">
    <property type="protein sequence ID" value="AAY94793.1"/>
    <property type="molecule type" value="Genomic_DNA"/>
</dbReference>
<dbReference type="RefSeq" id="WP_011063778.1">
    <property type="nucleotide sequence ID" value="NC_004129.6"/>
</dbReference>
<dbReference type="SMR" id="Q4K527"/>
<dbReference type="STRING" id="220664.PFL_5588"/>
<dbReference type="GeneID" id="57478537"/>
<dbReference type="KEGG" id="pfl:PFL_5588"/>
<dbReference type="PATRIC" id="fig|220664.5.peg.5707"/>
<dbReference type="eggNOG" id="COG0086">
    <property type="taxonomic scope" value="Bacteria"/>
</dbReference>
<dbReference type="HOGENOM" id="CLU_000524_3_1_6"/>
<dbReference type="Proteomes" id="UP000008540">
    <property type="component" value="Chromosome"/>
</dbReference>
<dbReference type="GO" id="GO:0000428">
    <property type="term" value="C:DNA-directed RNA polymerase complex"/>
    <property type="evidence" value="ECO:0007669"/>
    <property type="project" value="UniProtKB-KW"/>
</dbReference>
<dbReference type="GO" id="GO:0003677">
    <property type="term" value="F:DNA binding"/>
    <property type="evidence" value="ECO:0007669"/>
    <property type="project" value="UniProtKB-UniRule"/>
</dbReference>
<dbReference type="GO" id="GO:0003899">
    <property type="term" value="F:DNA-directed RNA polymerase activity"/>
    <property type="evidence" value="ECO:0007669"/>
    <property type="project" value="UniProtKB-UniRule"/>
</dbReference>
<dbReference type="GO" id="GO:0000287">
    <property type="term" value="F:magnesium ion binding"/>
    <property type="evidence" value="ECO:0007669"/>
    <property type="project" value="UniProtKB-UniRule"/>
</dbReference>
<dbReference type="GO" id="GO:0008270">
    <property type="term" value="F:zinc ion binding"/>
    <property type="evidence" value="ECO:0007669"/>
    <property type="project" value="UniProtKB-UniRule"/>
</dbReference>
<dbReference type="GO" id="GO:0006351">
    <property type="term" value="P:DNA-templated transcription"/>
    <property type="evidence" value="ECO:0007669"/>
    <property type="project" value="UniProtKB-UniRule"/>
</dbReference>
<dbReference type="CDD" id="cd02655">
    <property type="entry name" value="RNAP_beta'_C"/>
    <property type="match status" value="1"/>
</dbReference>
<dbReference type="CDD" id="cd01609">
    <property type="entry name" value="RNAP_beta'_N"/>
    <property type="match status" value="1"/>
</dbReference>
<dbReference type="FunFam" id="1.10.132.30:FF:000003">
    <property type="entry name" value="DNA-directed RNA polymerase subunit beta"/>
    <property type="match status" value="1"/>
</dbReference>
<dbReference type="FunFam" id="1.10.150.390:FF:000002">
    <property type="entry name" value="DNA-directed RNA polymerase subunit beta"/>
    <property type="match status" value="1"/>
</dbReference>
<dbReference type="FunFam" id="1.10.40.90:FF:000001">
    <property type="entry name" value="DNA-directed RNA polymerase subunit beta"/>
    <property type="match status" value="1"/>
</dbReference>
<dbReference type="FunFam" id="4.10.860.120:FF:000001">
    <property type="entry name" value="DNA-directed RNA polymerase subunit beta"/>
    <property type="match status" value="1"/>
</dbReference>
<dbReference type="Gene3D" id="1.10.132.30">
    <property type="match status" value="1"/>
</dbReference>
<dbReference type="Gene3D" id="1.10.150.390">
    <property type="match status" value="1"/>
</dbReference>
<dbReference type="Gene3D" id="1.10.1790.20">
    <property type="match status" value="1"/>
</dbReference>
<dbReference type="Gene3D" id="1.10.40.90">
    <property type="match status" value="1"/>
</dbReference>
<dbReference type="Gene3D" id="2.40.40.20">
    <property type="match status" value="1"/>
</dbReference>
<dbReference type="Gene3D" id="2.40.50.100">
    <property type="match status" value="3"/>
</dbReference>
<dbReference type="Gene3D" id="4.10.860.120">
    <property type="entry name" value="RNA polymerase II, clamp domain"/>
    <property type="match status" value="1"/>
</dbReference>
<dbReference type="Gene3D" id="1.10.274.100">
    <property type="entry name" value="RNA polymerase Rpb1, domain 3"/>
    <property type="match status" value="1"/>
</dbReference>
<dbReference type="HAMAP" id="MF_01322">
    <property type="entry name" value="RNApol_bact_RpoC"/>
    <property type="match status" value="1"/>
</dbReference>
<dbReference type="InterPro" id="IPR045867">
    <property type="entry name" value="DNA-dir_RpoC_beta_prime"/>
</dbReference>
<dbReference type="InterPro" id="IPR012754">
    <property type="entry name" value="DNA-dir_RpoC_beta_prime_bact"/>
</dbReference>
<dbReference type="InterPro" id="IPR000722">
    <property type="entry name" value="RNA_pol_asu"/>
</dbReference>
<dbReference type="InterPro" id="IPR006592">
    <property type="entry name" value="RNA_pol_N"/>
</dbReference>
<dbReference type="InterPro" id="IPR007080">
    <property type="entry name" value="RNA_pol_Rpb1_1"/>
</dbReference>
<dbReference type="InterPro" id="IPR007066">
    <property type="entry name" value="RNA_pol_Rpb1_3"/>
</dbReference>
<dbReference type="InterPro" id="IPR042102">
    <property type="entry name" value="RNA_pol_Rpb1_3_sf"/>
</dbReference>
<dbReference type="InterPro" id="IPR007083">
    <property type="entry name" value="RNA_pol_Rpb1_4"/>
</dbReference>
<dbReference type="InterPro" id="IPR007081">
    <property type="entry name" value="RNA_pol_Rpb1_5"/>
</dbReference>
<dbReference type="InterPro" id="IPR044893">
    <property type="entry name" value="RNA_pol_Rpb1_clamp_domain"/>
</dbReference>
<dbReference type="InterPro" id="IPR038120">
    <property type="entry name" value="Rpb1_funnel_sf"/>
</dbReference>
<dbReference type="NCBIfam" id="TIGR02386">
    <property type="entry name" value="rpoC_TIGR"/>
    <property type="match status" value="1"/>
</dbReference>
<dbReference type="PANTHER" id="PTHR19376">
    <property type="entry name" value="DNA-DIRECTED RNA POLYMERASE"/>
    <property type="match status" value="1"/>
</dbReference>
<dbReference type="PANTHER" id="PTHR19376:SF54">
    <property type="entry name" value="DNA-DIRECTED RNA POLYMERASE SUBUNIT BETA"/>
    <property type="match status" value="1"/>
</dbReference>
<dbReference type="Pfam" id="PF04997">
    <property type="entry name" value="RNA_pol_Rpb1_1"/>
    <property type="match status" value="1"/>
</dbReference>
<dbReference type="Pfam" id="PF00623">
    <property type="entry name" value="RNA_pol_Rpb1_2"/>
    <property type="match status" value="2"/>
</dbReference>
<dbReference type="Pfam" id="PF04983">
    <property type="entry name" value="RNA_pol_Rpb1_3"/>
    <property type="match status" value="1"/>
</dbReference>
<dbReference type="Pfam" id="PF05000">
    <property type="entry name" value="RNA_pol_Rpb1_4"/>
    <property type="match status" value="1"/>
</dbReference>
<dbReference type="Pfam" id="PF04998">
    <property type="entry name" value="RNA_pol_Rpb1_5"/>
    <property type="match status" value="1"/>
</dbReference>
<dbReference type="SMART" id="SM00663">
    <property type="entry name" value="RPOLA_N"/>
    <property type="match status" value="1"/>
</dbReference>
<dbReference type="SUPFAM" id="SSF64484">
    <property type="entry name" value="beta and beta-prime subunits of DNA dependent RNA-polymerase"/>
    <property type="match status" value="1"/>
</dbReference>
<keyword id="KW-0240">DNA-directed RNA polymerase</keyword>
<keyword id="KW-0460">Magnesium</keyword>
<keyword id="KW-0479">Metal-binding</keyword>
<keyword id="KW-0548">Nucleotidyltransferase</keyword>
<keyword id="KW-0804">Transcription</keyword>
<keyword id="KW-0808">Transferase</keyword>
<keyword id="KW-0862">Zinc</keyword>
<name>RPOC_PSEF5</name>
<organism>
    <name type="scientific">Pseudomonas fluorescens (strain ATCC BAA-477 / NRRL B-23932 / Pf-5)</name>
    <dbReference type="NCBI Taxonomy" id="220664"/>
    <lineage>
        <taxon>Bacteria</taxon>
        <taxon>Pseudomonadati</taxon>
        <taxon>Pseudomonadota</taxon>
        <taxon>Gammaproteobacteria</taxon>
        <taxon>Pseudomonadales</taxon>
        <taxon>Pseudomonadaceae</taxon>
        <taxon>Pseudomonas</taxon>
    </lineage>
</organism>
<sequence>MKDLLNLLKNQGQVEEFDAIRIGLASPEMIRSWSFGEVKKPETINYRTFKPERDGLFCAKIFGPVKDYECLCGKYKRLKHRGVICEKCGVEVALAKVRRERMAHIELASPVAHIWFLKSLPSRIGLLMDMTLRDIERVLYFESYVVIDPGMTTLEKGQLLNDEQYFEALEEFGDDFDARMGAEAVRELLHAIDLEHEIGRLREEIPQTNSETKIKKLSKRLKLMEAFQGSGNLPEWMVLTVLPVLPPDLRPLVPLDGGRFATSDLNDLYRRVINRNNRLKRLLDLSAPDIIVRNEKRMLQEAVDALLDNGRRGRAITGSNKRPLKSLADMIKGKQGRFRQNLLGKRVDYSGRSVITVGPTLRLHQCGLPKKMALELFKPFIFGKLEMRGLATTIKAAKKMVERELPEVWDVLAEVIREHPVLLNRAPTLHRLGIQAFEPVLIEGKAIQLHPLVCAAYNADFDGDQMAVHVPLTLEAQLEARALMMSTNNILSPANGEPIIVPSQDVVLGLYYMTREAINAKGEGRVFADLQEVDRVFRAGEAALHAKIKVRISETVNDRDGGSVSATRIVDTTVGRALLFQVVPKGLSFDVVNLPMKKKAISKLINQCYRVVGLKETVIFADQLMYTGFAYSTISGVSIGVNDFVIPDEKARIIGAATDEVKEIESQYASGLVTQGEKYNKVIDLWSKANDEVSKAMMANLSKEKVIDRNGDEVEQESFNSMYMMADSGARGSAAQIRQLAGMRGLMAKPDGSIIETPITANFREGLSVLQYFISTHGARKGLADTALKTANSGYLTRRLVDVAQDLVVTEIDCGTEHGLLMTPHIEGGDVVEPLGERVLGRVIARDVFKPGTEDVIVPAGTLVDEKWVEFIELNSIDEVIVRSPISCETRYGICAKCYGRDLARGHQVNIGEAVGVIAAQSIGEPGTQLTMRTFHIGGAASRTSAADSVQVKNGGTVRLHNLKHVERVDGHLVAVSRSGELAIADDFGRERERYKLPYGAVISVKEGDKVDAGAIVAKWDPHTHPIVTEMKGTVTYVGMEEGITIKRQTDELTGMTNIEVLDVKDRPAAGKDIRPAVKMVGMDGKDLLLPGTDVPAQYFLPANALVGVADGAQIAIGDVIARIPQETSKTRDITGGLPRVADLFEARRPKEASILAEVSGTIAFGKETKGKRRLVITPNDGSDPYEELIPKWRHLNVFEGEQVNRGEVISDGPSDPHDILRLLGVSALAKYIVNEIQDVYRLQGVKINDKHIETILRQMLRKVEIAESGDSSFIKGDQMELTHVLVENERLSTEDKFVAKFTRVLLGITKASLSTESFISAASFQETTRVLTEAAVTGKRDYLRGLKENVVVGRLIPAGTGLAYHSERKRRRDADKPLRVSASEVEAALTEALNSSGN</sequence>
<reference key="1">
    <citation type="journal article" date="2005" name="Nat. Biotechnol.">
        <title>Complete genome sequence of the plant commensal Pseudomonas fluorescens Pf-5.</title>
        <authorList>
            <person name="Paulsen I.T."/>
            <person name="Press C.M."/>
            <person name="Ravel J."/>
            <person name="Kobayashi D.Y."/>
            <person name="Myers G.S.A."/>
            <person name="Mavrodi D.V."/>
            <person name="DeBoy R.T."/>
            <person name="Seshadri R."/>
            <person name="Ren Q."/>
            <person name="Madupu R."/>
            <person name="Dodson R.J."/>
            <person name="Durkin A.S."/>
            <person name="Brinkac L.M."/>
            <person name="Daugherty S.C."/>
            <person name="Sullivan S.A."/>
            <person name="Rosovitz M.J."/>
            <person name="Gwinn M.L."/>
            <person name="Zhou L."/>
            <person name="Schneider D.J."/>
            <person name="Cartinhour S.W."/>
            <person name="Nelson W.C."/>
            <person name="Weidman J."/>
            <person name="Watkins K."/>
            <person name="Tran K."/>
            <person name="Khouri H."/>
            <person name="Pierson E.A."/>
            <person name="Pierson L.S. III"/>
            <person name="Thomashow L.S."/>
            <person name="Loper J.E."/>
        </authorList>
    </citation>
    <scope>NUCLEOTIDE SEQUENCE [LARGE SCALE GENOMIC DNA]</scope>
    <source>
        <strain>ATCC BAA-477 / NRRL B-23932 / Pf-5</strain>
    </source>
</reference>
<evidence type="ECO:0000255" key="1">
    <source>
        <dbReference type="HAMAP-Rule" id="MF_01322"/>
    </source>
</evidence>
<accession>Q4K527</accession>
<proteinExistence type="inferred from homology"/>
<gene>
    <name evidence="1" type="primary">rpoC</name>
    <name type="ordered locus">PFL_5588</name>
</gene>